<organism>
    <name type="scientific">Burkholderia cenocepacia (strain ATCC BAA-245 / DSM 16553 / LMG 16656 / NCTC 13227 / J2315 / CF5610)</name>
    <name type="common">Burkholderia cepacia (strain J2315)</name>
    <dbReference type="NCBI Taxonomy" id="216591"/>
    <lineage>
        <taxon>Bacteria</taxon>
        <taxon>Pseudomonadati</taxon>
        <taxon>Pseudomonadota</taxon>
        <taxon>Betaproteobacteria</taxon>
        <taxon>Burkholderiales</taxon>
        <taxon>Burkholderiaceae</taxon>
        <taxon>Burkholderia</taxon>
        <taxon>Burkholderia cepacia complex</taxon>
    </lineage>
</organism>
<keyword id="KW-0067">ATP-binding</keyword>
<keyword id="KW-0342">GTP-binding</keyword>
<keyword id="KW-0547">Nucleotide-binding</keyword>
<evidence type="ECO:0000255" key="1">
    <source>
        <dbReference type="HAMAP-Rule" id="MF_00636"/>
    </source>
</evidence>
<dbReference type="EMBL" id="AM747720">
    <property type="protein sequence ID" value="CAR51115.1"/>
    <property type="molecule type" value="Genomic_DNA"/>
</dbReference>
<dbReference type="SMR" id="B4EAS0"/>
<dbReference type="KEGG" id="bcj:BCAL0808"/>
<dbReference type="eggNOG" id="COG1660">
    <property type="taxonomic scope" value="Bacteria"/>
</dbReference>
<dbReference type="HOGENOM" id="CLU_059558_1_1_4"/>
<dbReference type="BioCyc" id="BCEN216591:G1G1V-902-MONOMER"/>
<dbReference type="Proteomes" id="UP000001035">
    <property type="component" value="Chromosome 1"/>
</dbReference>
<dbReference type="GO" id="GO:0005524">
    <property type="term" value="F:ATP binding"/>
    <property type="evidence" value="ECO:0007669"/>
    <property type="project" value="UniProtKB-UniRule"/>
</dbReference>
<dbReference type="GO" id="GO:0005525">
    <property type="term" value="F:GTP binding"/>
    <property type="evidence" value="ECO:0007669"/>
    <property type="project" value="UniProtKB-UniRule"/>
</dbReference>
<dbReference type="Gene3D" id="3.40.50.300">
    <property type="entry name" value="P-loop containing nucleotide triphosphate hydrolases"/>
    <property type="match status" value="1"/>
</dbReference>
<dbReference type="HAMAP" id="MF_00636">
    <property type="entry name" value="RapZ_like"/>
    <property type="match status" value="1"/>
</dbReference>
<dbReference type="InterPro" id="IPR027417">
    <property type="entry name" value="P-loop_NTPase"/>
</dbReference>
<dbReference type="InterPro" id="IPR005337">
    <property type="entry name" value="RapZ-like"/>
</dbReference>
<dbReference type="InterPro" id="IPR053930">
    <property type="entry name" value="RapZ-like_N"/>
</dbReference>
<dbReference type="InterPro" id="IPR053931">
    <property type="entry name" value="RapZ_C"/>
</dbReference>
<dbReference type="NCBIfam" id="NF003828">
    <property type="entry name" value="PRK05416.1"/>
    <property type="match status" value="1"/>
</dbReference>
<dbReference type="PANTHER" id="PTHR30448">
    <property type="entry name" value="RNASE ADAPTER PROTEIN RAPZ"/>
    <property type="match status" value="1"/>
</dbReference>
<dbReference type="PANTHER" id="PTHR30448:SF0">
    <property type="entry name" value="RNASE ADAPTER PROTEIN RAPZ"/>
    <property type="match status" value="1"/>
</dbReference>
<dbReference type="Pfam" id="PF22740">
    <property type="entry name" value="PapZ_C"/>
    <property type="match status" value="1"/>
</dbReference>
<dbReference type="Pfam" id="PF03668">
    <property type="entry name" value="RapZ-like_N"/>
    <property type="match status" value="1"/>
</dbReference>
<dbReference type="PIRSF" id="PIRSF005052">
    <property type="entry name" value="P-loopkin"/>
    <property type="match status" value="1"/>
</dbReference>
<dbReference type="SUPFAM" id="SSF52540">
    <property type="entry name" value="P-loop containing nucleoside triphosphate hydrolases"/>
    <property type="match status" value="1"/>
</dbReference>
<reference key="1">
    <citation type="journal article" date="2009" name="J. Bacteriol.">
        <title>The genome of Burkholderia cenocepacia J2315, an epidemic pathogen of cystic fibrosis patients.</title>
        <authorList>
            <person name="Holden M.T."/>
            <person name="Seth-Smith H.M."/>
            <person name="Crossman L.C."/>
            <person name="Sebaihia M."/>
            <person name="Bentley S.D."/>
            <person name="Cerdeno-Tarraga A.M."/>
            <person name="Thomson N.R."/>
            <person name="Bason N."/>
            <person name="Quail M.A."/>
            <person name="Sharp S."/>
            <person name="Cherevach I."/>
            <person name="Churcher C."/>
            <person name="Goodhead I."/>
            <person name="Hauser H."/>
            <person name="Holroyd N."/>
            <person name="Mungall K."/>
            <person name="Scott P."/>
            <person name="Walker D."/>
            <person name="White B."/>
            <person name="Rose H."/>
            <person name="Iversen P."/>
            <person name="Mil-Homens D."/>
            <person name="Rocha E.P."/>
            <person name="Fialho A.M."/>
            <person name="Baldwin A."/>
            <person name="Dowson C."/>
            <person name="Barrell B.G."/>
            <person name="Govan J.R."/>
            <person name="Vandamme P."/>
            <person name="Hart C.A."/>
            <person name="Mahenthiralingam E."/>
            <person name="Parkhill J."/>
        </authorList>
    </citation>
    <scope>NUCLEOTIDE SEQUENCE [LARGE SCALE GENOMIC DNA]</scope>
    <source>
        <strain>ATCC BAA-245 / DSM 16553 / LMG 16656 / NCTC 13227 / J2315 / CF5610</strain>
    </source>
</reference>
<protein>
    <recommendedName>
        <fullName evidence="1">Nucleotide-binding protein BceJ2315_08000</fullName>
    </recommendedName>
</protein>
<proteinExistence type="inferred from homology"/>
<sequence length="302" mass="33880">MRIVLITGISGSGKSVALNALEDAGYYCVDNLPPHVLPELARYLAQDGQRRLAVAIDARSSASLDEMPGLIRELSREHDVRVLFLNASTQALIQRFSETRRRHPLSGSLSHDADVGLLSSLEEAIERERELVAPLAEFGHQIDTSTLRANALRTWVKRFIEQKNNDLMVMFESFGFKRGVPLDADLMFDVRALPNPYYDHQLRPLTGLDQPVIAFLDALPIVHQMIDDIHAFLMKWLPHFRDDNRSYLTVAIGCTGGQHRSVFIAETLAARLAREANVIVRHRDAPVDVDASSRLVSEVDRP</sequence>
<feature type="chain" id="PRO_1000130736" description="Nucleotide-binding protein BceJ2315_08000">
    <location>
        <begin position="1"/>
        <end position="302"/>
    </location>
</feature>
<feature type="binding site" evidence="1">
    <location>
        <begin position="8"/>
        <end position="15"/>
    </location>
    <ligand>
        <name>ATP</name>
        <dbReference type="ChEBI" id="CHEBI:30616"/>
    </ligand>
</feature>
<feature type="binding site" evidence="1">
    <location>
        <begin position="57"/>
        <end position="60"/>
    </location>
    <ligand>
        <name>GTP</name>
        <dbReference type="ChEBI" id="CHEBI:37565"/>
    </ligand>
</feature>
<name>Y800_BURCJ</name>
<gene>
    <name type="ordered locus">BceJ2315_08000</name>
    <name type="ORF">BCAL0808</name>
</gene>
<accession>B4EAS0</accession>
<comment type="function">
    <text evidence="1">Displays ATPase and GTPase activities.</text>
</comment>
<comment type="similarity">
    <text evidence="1">Belongs to the RapZ-like family.</text>
</comment>